<proteinExistence type="inferred from homology"/>
<organism>
    <name type="scientific">Prochlorococcus marinus (strain NATL2A)</name>
    <dbReference type="NCBI Taxonomy" id="59920"/>
    <lineage>
        <taxon>Bacteria</taxon>
        <taxon>Bacillati</taxon>
        <taxon>Cyanobacteriota</taxon>
        <taxon>Cyanophyceae</taxon>
        <taxon>Synechococcales</taxon>
        <taxon>Prochlorococcaceae</taxon>
        <taxon>Prochlorococcus</taxon>
    </lineage>
</organism>
<gene>
    <name evidence="1" type="primary">def</name>
    <name type="ordered locus">PMN2A_1431</name>
</gene>
<comment type="function">
    <text evidence="1">Removes the formyl group from the N-terminal Met of newly synthesized proteins. Requires at least a dipeptide for an efficient rate of reaction. N-terminal L-methionine is a prerequisite for activity but the enzyme has broad specificity at other positions.</text>
</comment>
<comment type="catalytic activity">
    <reaction evidence="1">
        <text>N-terminal N-formyl-L-methionyl-[peptide] + H2O = N-terminal L-methionyl-[peptide] + formate</text>
        <dbReference type="Rhea" id="RHEA:24420"/>
        <dbReference type="Rhea" id="RHEA-COMP:10639"/>
        <dbReference type="Rhea" id="RHEA-COMP:10640"/>
        <dbReference type="ChEBI" id="CHEBI:15377"/>
        <dbReference type="ChEBI" id="CHEBI:15740"/>
        <dbReference type="ChEBI" id="CHEBI:49298"/>
        <dbReference type="ChEBI" id="CHEBI:64731"/>
        <dbReference type="EC" id="3.5.1.88"/>
    </reaction>
</comment>
<comment type="cofactor">
    <cofactor evidence="1">
        <name>Fe(2+)</name>
        <dbReference type="ChEBI" id="CHEBI:29033"/>
    </cofactor>
    <text evidence="1">Binds 1 Fe(2+) ion.</text>
</comment>
<comment type="similarity">
    <text evidence="1">Belongs to the polypeptide deformylase family.</text>
</comment>
<evidence type="ECO:0000255" key="1">
    <source>
        <dbReference type="HAMAP-Rule" id="MF_00163"/>
    </source>
</evidence>
<evidence type="ECO:0000256" key="2">
    <source>
        <dbReference type="SAM" id="MobiDB-lite"/>
    </source>
</evidence>
<protein>
    <recommendedName>
        <fullName evidence="1">Peptide deformylase</fullName>
        <shortName evidence="1">PDF</shortName>
        <ecNumber evidence="1">3.5.1.88</ecNumber>
    </recommendedName>
    <alternativeName>
        <fullName evidence="1">Polypeptide deformylase</fullName>
    </alternativeName>
</protein>
<name>DEF_PROMT</name>
<keyword id="KW-0378">Hydrolase</keyword>
<keyword id="KW-0408">Iron</keyword>
<keyword id="KW-0479">Metal-binding</keyword>
<keyword id="KW-0648">Protein biosynthesis</keyword>
<keyword id="KW-1185">Reference proteome</keyword>
<reference key="1">
    <citation type="journal article" date="2007" name="PLoS Genet.">
        <title>Patterns and implications of gene gain and loss in the evolution of Prochlorococcus.</title>
        <authorList>
            <person name="Kettler G.C."/>
            <person name="Martiny A.C."/>
            <person name="Huang K."/>
            <person name="Zucker J."/>
            <person name="Coleman M.L."/>
            <person name="Rodrigue S."/>
            <person name="Chen F."/>
            <person name="Lapidus A."/>
            <person name="Ferriera S."/>
            <person name="Johnson J."/>
            <person name="Steglich C."/>
            <person name="Church G.M."/>
            <person name="Richardson P."/>
            <person name="Chisholm S.W."/>
        </authorList>
    </citation>
    <scope>NUCLEOTIDE SEQUENCE [LARGE SCALE GENOMIC DNA]</scope>
    <source>
        <strain>NATL2A</strain>
    </source>
</reference>
<feature type="chain" id="PRO_0000301081" description="Peptide deformylase">
    <location>
        <begin position="1"/>
        <end position="202"/>
    </location>
</feature>
<feature type="region of interest" description="Disordered" evidence="2">
    <location>
        <begin position="1"/>
        <end position="24"/>
    </location>
</feature>
<feature type="active site" evidence="1">
    <location>
        <position position="164"/>
    </location>
</feature>
<feature type="binding site" evidence="1">
    <location>
        <position position="121"/>
    </location>
    <ligand>
        <name>Fe cation</name>
        <dbReference type="ChEBI" id="CHEBI:24875"/>
    </ligand>
</feature>
<feature type="binding site" evidence="1">
    <location>
        <position position="163"/>
    </location>
    <ligand>
        <name>Fe cation</name>
        <dbReference type="ChEBI" id="CHEBI:24875"/>
    </ligand>
</feature>
<feature type="binding site" evidence="1">
    <location>
        <position position="167"/>
    </location>
    <ligand>
        <name>Fe cation</name>
        <dbReference type="ChEBI" id="CHEBI:24875"/>
    </ligand>
</feature>
<accession>Q46HV9</accession>
<dbReference type="EC" id="3.5.1.88" evidence="1"/>
<dbReference type="EMBL" id="CP000095">
    <property type="protein sequence ID" value="AAZ58919.1"/>
    <property type="molecule type" value="Genomic_DNA"/>
</dbReference>
<dbReference type="RefSeq" id="WP_011294063.1">
    <property type="nucleotide sequence ID" value="NC_007335.2"/>
</dbReference>
<dbReference type="SMR" id="Q46HV9"/>
<dbReference type="STRING" id="59920.PMN2A_1431"/>
<dbReference type="KEGG" id="pmn:PMN2A_1431"/>
<dbReference type="HOGENOM" id="CLU_061901_4_2_3"/>
<dbReference type="OrthoDB" id="9784988at2"/>
<dbReference type="PhylomeDB" id="Q46HV9"/>
<dbReference type="Proteomes" id="UP000002535">
    <property type="component" value="Chromosome"/>
</dbReference>
<dbReference type="GO" id="GO:0046872">
    <property type="term" value="F:metal ion binding"/>
    <property type="evidence" value="ECO:0007669"/>
    <property type="project" value="UniProtKB-KW"/>
</dbReference>
<dbReference type="GO" id="GO:0042586">
    <property type="term" value="F:peptide deformylase activity"/>
    <property type="evidence" value="ECO:0007669"/>
    <property type="project" value="UniProtKB-UniRule"/>
</dbReference>
<dbReference type="GO" id="GO:0043686">
    <property type="term" value="P:co-translational protein modification"/>
    <property type="evidence" value="ECO:0007669"/>
    <property type="project" value="TreeGrafter"/>
</dbReference>
<dbReference type="GO" id="GO:0006412">
    <property type="term" value="P:translation"/>
    <property type="evidence" value="ECO:0007669"/>
    <property type="project" value="UniProtKB-UniRule"/>
</dbReference>
<dbReference type="CDD" id="cd00487">
    <property type="entry name" value="Pep_deformylase"/>
    <property type="match status" value="1"/>
</dbReference>
<dbReference type="FunFam" id="3.90.45.10:FF:000005">
    <property type="entry name" value="Peptide deformylase"/>
    <property type="match status" value="1"/>
</dbReference>
<dbReference type="Gene3D" id="3.90.45.10">
    <property type="entry name" value="Peptide deformylase"/>
    <property type="match status" value="1"/>
</dbReference>
<dbReference type="HAMAP" id="MF_00163">
    <property type="entry name" value="Pep_deformylase"/>
    <property type="match status" value="1"/>
</dbReference>
<dbReference type="InterPro" id="IPR023635">
    <property type="entry name" value="Peptide_deformylase"/>
</dbReference>
<dbReference type="InterPro" id="IPR036821">
    <property type="entry name" value="Peptide_deformylase_sf"/>
</dbReference>
<dbReference type="NCBIfam" id="TIGR00079">
    <property type="entry name" value="pept_deformyl"/>
    <property type="match status" value="1"/>
</dbReference>
<dbReference type="NCBIfam" id="NF001159">
    <property type="entry name" value="PRK00150.1-3"/>
    <property type="match status" value="1"/>
</dbReference>
<dbReference type="PANTHER" id="PTHR10458">
    <property type="entry name" value="PEPTIDE DEFORMYLASE"/>
    <property type="match status" value="1"/>
</dbReference>
<dbReference type="PANTHER" id="PTHR10458:SF22">
    <property type="entry name" value="PEPTIDE DEFORMYLASE"/>
    <property type="match status" value="1"/>
</dbReference>
<dbReference type="Pfam" id="PF01327">
    <property type="entry name" value="Pep_deformylase"/>
    <property type="match status" value="1"/>
</dbReference>
<dbReference type="PIRSF" id="PIRSF004749">
    <property type="entry name" value="Pep_def"/>
    <property type="match status" value="1"/>
</dbReference>
<dbReference type="PRINTS" id="PR01576">
    <property type="entry name" value="PDEFORMYLASE"/>
</dbReference>
<dbReference type="SUPFAM" id="SSF56420">
    <property type="entry name" value="Peptide deformylase"/>
    <property type="match status" value="1"/>
</dbReference>
<sequence length="202" mass="22517">MAGSFAQLAKNAEKKKPSISVSKEPVENPPLKVYQLGDEALRTPANRIVKVDDAIRKLAKDMLITMYSSKGIGLAAPQVGIQKRLLVIDLKFEDPNSPPMVFINPEIISSSATLDTYEEGCLSIPGVYLNVLRPSSIKLSYRDEMGRPKKMNADGLMARCIQHEIDHLNGVCFVDKVTDEEELKKQLNENNFKRSDVIKETN</sequence>